<keyword id="KW-0238">DNA-binding</keyword>
<keyword id="KW-0255">Endonuclease</keyword>
<keyword id="KW-0378">Hydrolase</keyword>
<keyword id="KW-0460">Magnesium</keyword>
<keyword id="KW-0479">Metal-binding</keyword>
<keyword id="KW-0540">Nuclease</keyword>
<keyword id="KW-0630">Potassium</keyword>
<keyword id="KW-1185">Reference proteome</keyword>
<sequence>MAHLLILDALNLIRRIHSVQSKQHPDDVAAQLAATDITMQRAVNTILQEATPSHVIAVFDSEAPGWRKAKYAAYKEGRTAMPDALRQGLGQLQDSLLRLGIDSLVSETDEADDLIATLVKPLVANDHQVTLISTDKGFCQLLDSGLQIRDYFNKRWLDHAFVQQQYGLQPSQLVDFWALTGISGMNIKGVPGIGEKTAQQLLSEYGTLTQLLDADATDNKKLQLVQQHREVCLLAQELVRLKDDIPLGFNLKDLRYTPPA</sequence>
<comment type="function">
    <text evidence="1">Has flap endonuclease activity. During DNA replication, flap endonucleases cleave the 5'-overhanging flap structure that is generated by displacement synthesis when DNA polymerase encounters the 5'-end of a downstream Okazaki fragment.</text>
</comment>
<comment type="cofactor">
    <cofactor evidence="1">
        <name>Mg(2+)</name>
        <dbReference type="ChEBI" id="CHEBI:18420"/>
    </cofactor>
    <text evidence="1">Binds 2 Mg(2+) per subunit. Only one magnesium ion has a direct interaction with the protein, the other interactions are indirect.</text>
</comment>
<comment type="cofactor">
    <cofactor evidence="1">
        <name>K(+)</name>
        <dbReference type="ChEBI" id="CHEBI:29103"/>
    </cofactor>
    <text evidence="1">Binds 1 K(+) per subunit. The potassium ion strongly increases the affinity for DNA.</text>
</comment>
<comment type="similarity">
    <text evidence="1">Belongs to the Xni family.</text>
</comment>
<evidence type="ECO:0000255" key="1">
    <source>
        <dbReference type="HAMAP-Rule" id="MF_01192"/>
    </source>
</evidence>
<name>XNI_TOLAT</name>
<feature type="chain" id="PRO_1000213798" description="Flap endonuclease Xni">
    <location>
        <begin position="1"/>
        <end position="260"/>
    </location>
</feature>
<feature type="domain" description="5'-3' exonuclease" evidence="1">
    <location>
        <begin position="168"/>
        <end position="258"/>
    </location>
</feature>
<feature type="region of interest" description="Interaction with DNA" evidence="1">
    <location>
        <begin position="192"/>
        <end position="197"/>
    </location>
</feature>
<feature type="binding site" evidence="1">
    <location>
        <position position="112"/>
    </location>
    <ligand>
        <name>Mg(2+)</name>
        <dbReference type="ChEBI" id="CHEBI:18420"/>
    </ligand>
</feature>
<feature type="binding site" evidence="1">
    <location>
        <position position="179"/>
    </location>
    <ligand>
        <name>K(+)</name>
        <dbReference type="ChEBI" id="CHEBI:29103"/>
    </ligand>
</feature>
<feature type="binding site" evidence="1">
    <location>
        <position position="190"/>
    </location>
    <ligand>
        <name>K(+)</name>
        <dbReference type="ChEBI" id="CHEBI:29103"/>
    </ligand>
</feature>
<feature type="binding site" evidence="1">
    <location>
        <position position="193"/>
    </location>
    <ligand>
        <name>K(+)</name>
        <dbReference type="ChEBI" id="CHEBI:29103"/>
    </ligand>
</feature>
<organism>
    <name type="scientific">Tolumonas auensis (strain DSM 9187 / NBRC 110442 / TA 4)</name>
    <dbReference type="NCBI Taxonomy" id="595494"/>
    <lineage>
        <taxon>Bacteria</taxon>
        <taxon>Pseudomonadati</taxon>
        <taxon>Pseudomonadota</taxon>
        <taxon>Gammaproteobacteria</taxon>
        <taxon>Aeromonadales</taxon>
        <taxon>Aeromonadaceae</taxon>
        <taxon>Tolumonas</taxon>
    </lineage>
</organism>
<protein>
    <recommendedName>
        <fullName evidence="1">Flap endonuclease Xni</fullName>
        <shortName evidence="1">FEN</shortName>
        <ecNumber evidence="1">3.1.-.-</ecNumber>
    </recommendedName>
</protein>
<dbReference type="EC" id="3.1.-.-" evidence="1"/>
<dbReference type="EMBL" id="CP001616">
    <property type="protein sequence ID" value="ACQ92119.1"/>
    <property type="molecule type" value="Genomic_DNA"/>
</dbReference>
<dbReference type="RefSeq" id="WP_012728718.1">
    <property type="nucleotide sequence ID" value="NC_012691.1"/>
</dbReference>
<dbReference type="SMR" id="C4L9Z0"/>
<dbReference type="STRING" id="595494.Tola_0490"/>
<dbReference type="KEGG" id="tau:Tola_0490"/>
<dbReference type="eggNOG" id="COG0258">
    <property type="taxonomic scope" value="Bacteria"/>
</dbReference>
<dbReference type="HOGENOM" id="CLU_004675_1_2_6"/>
<dbReference type="OrthoDB" id="8070997at2"/>
<dbReference type="Proteomes" id="UP000009073">
    <property type="component" value="Chromosome"/>
</dbReference>
<dbReference type="GO" id="GO:0008409">
    <property type="term" value="F:5'-3' exonuclease activity"/>
    <property type="evidence" value="ECO:0007669"/>
    <property type="project" value="InterPro"/>
</dbReference>
<dbReference type="GO" id="GO:0017108">
    <property type="term" value="F:5'-flap endonuclease activity"/>
    <property type="evidence" value="ECO:0007669"/>
    <property type="project" value="UniProtKB-UniRule"/>
</dbReference>
<dbReference type="GO" id="GO:0003677">
    <property type="term" value="F:DNA binding"/>
    <property type="evidence" value="ECO:0007669"/>
    <property type="project" value="UniProtKB-UniRule"/>
</dbReference>
<dbReference type="GO" id="GO:0000287">
    <property type="term" value="F:magnesium ion binding"/>
    <property type="evidence" value="ECO:0007669"/>
    <property type="project" value="UniProtKB-UniRule"/>
</dbReference>
<dbReference type="GO" id="GO:0030955">
    <property type="term" value="F:potassium ion binding"/>
    <property type="evidence" value="ECO:0007669"/>
    <property type="project" value="UniProtKB-UniRule"/>
</dbReference>
<dbReference type="GO" id="GO:0033567">
    <property type="term" value="P:DNA replication, Okazaki fragment processing"/>
    <property type="evidence" value="ECO:0007669"/>
    <property type="project" value="UniProtKB-UniRule"/>
</dbReference>
<dbReference type="CDD" id="cd09898">
    <property type="entry name" value="H3TH_53EXO"/>
    <property type="match status" value="1"/>
</dbReference>
<dbReference type="CDD" id="cd09859">
    <property type="entry name" value="PIN_53EXO"/>
    <property type="match status" value="1"/>
</dbReference>
<dbReference type="FunFam" id="1.10.150.20:FF:000003">
    <property type="entry name" value="DNA polymerase I"/>
    <property type="match status" value="1"/>
</dbReference>
<dbReference type="Gene3D" id="1.10.150.20">
    <property type="entry name" value="5' to 3' exonuclease, C-terminal subdomain"/>
    <property type="match status" value="1"/>
</dbReference>
<dbReference type="Gene3D" id="3.40.50.1010">
    <property type="entry name" value="5'-nuclease"/>
    <property type="match status" value="1"/>
</dbReference>
<dbReference type="HAMAP" id="MF_01192">
    <property type="entry name" value="Xni"/>
    <property type="match status" value="1"/>
</dbReference>
<dbReference type="InterPro" id="IPR020046">
    <property type="entry name" value="5-3_exonucl_a-hlix_arch_N"/>
</dbReference>
<dbReference type="InterPro" id="IPR002421">
    <property type="entry name" value="5-3_exonuclease"/>
</dbReference>
<dbReference type="InterPro" id="IPR036279">
    <property type="entry name" value="5-3_exonuclease_C_sf"/>
</dbReference>
<dbReference type="InterPro" id="IPR020045">
    <property type="entry name" value="DNA_polI_H3TH"/>
</dbReference>
<dbReference type="InterPro" id="IPR038969">
    <property type="entry name" value="FEN"/>
</dbReference>
<dbReference type="InterPro" id="IPR008918">
    <property type="entry name" value="HhH2"/>
</dbReference>
<dbReference type="InterPro" id="IPR029060">
    <property type="entry name" value="PIN-like_dom_sf"/>
</dbReference>
<dbReference type="InterPro" id="IPR022895">
    <property type="entry name" value="Xni"/>
</dbReference>
<dbReference type="NCBIfam" id="NF007017">
    <property type="entry name" value="PRK09482.1"/>
    <property type="match status" value="1"/>
</dbReference>
<dbReference type="PANTHER" id="PTHR42646:SF2">
    <property type="entry name" value="5'-3' EXONUCLEASE FAMILY PROTEIN"/>
    <property type="match status" value="1"/>
</dbReference>
<dbReference type="PANTHER" id="PTHR42646">
    <property type="entry name" value="FLAP ENDONUCLEASE XNI"/>
    <property type="match status" value="1"/>
</dbReference>
<dbReference type="Pfam" id="PF01367">
    <property type="entry name" value="5_3_exonuc"/>
    <property type="match status" value="1"/>
</dbReference>
<dbReference type="Pfam" id="PF02739">
    <property type="entry name" value="5_3_exonuc_N"/>
    <property type="match status" value="1"/>
</dbReference>
<dbReference type="SMART" id="SM00475">
    <property type="entry name" value="53EXOc"/>
    <property type="match status" value="1"/>
</dbReference>
<dbReference type="SMART" id="SM00279">
    <property type="entry name" value="HhH2"/>
    <property type="match status" value="1"/>
</dbReference>
<dbReference type="SUPFAM" id="SSF47807">
    <property type="entry name" value="5' to 3' exonuclease, C-terminal subdomain"/>
    <property type="match status" value="1"/>
</dbReference>
<dbReference type="SUPFAM" id="SSF88723">
    <property type="entry name" value="PIN domain-like"/>
    <property type="match status" value="1"/>
</dbReference>
<gene>
    <name evidence="1" type="primary">xni</name>
    <name evidence="1" type="synonym">ygdG</name>
    <name type="ordered locus">Tola_0490</name>
</gene>
<accession>C4L9Z0</accession>
<proteinExistence type="inferred from homology"/>
<reference key="1">
    <citation type="submission" date="2009-05" db="EMBL/GenBank/DDBJ databases">
        <title>Complete sequence of Tolumonas auensis DSM 9187.</title>
        <authorList>
            <consortium name="US DOE Joint Genome Institute"/>
            <person name="Lucas S."/>
            <person name="Copeland A."/>
            <person name="Lapidus A."/>
            <person name="Glavina del Rio T."/>
            <person name="Tice H."/>
            <person name="Bruce D."/>
            <person name="Goodwin L."/>
            <person name="Pitluck S."/>
            <person name="Chertkov O."/>
            <person name="Brettin T."/>
            <person name="Detter J.C."/>
            <person name="Han C."/>
            <person name="Larimer F."/>
            <person name="Land M."/>
            <person name="Hauser L."/>
            <person name="Kyrpides N."/>
            <person name="Mikhailova N."/>
            <person name="Spring S."/>
            <person name="Beller H."/>
        </authorList>
    </citation>
    <scope>NUCLEOTIDE SEQUENCE [LARGE SCALE GENOMIC DNA]</scope>
    <source>
        <strain>DSM 9187 / NBRC 110442 / TA 4</strain>
    </source>
</reference>